<evidence type="ECO:0000255" key="1">
    <source>
        <dbReference type="HAMAP-Rule" id="MF_00503"/>
    </source>
</evidence>
<evidence type="ECO:0000305" key="2"/>
<gene>
    <name evidence="1" type="primary">rplI</name>
    <name type="ordered locus">SGR_3671</name>
</gene>
<keyword id="KW-0687">Ribonucleoprotein</keyword>
<keyword id="KW-0689">Ribosomal protein</keyword>
<keyword id="KW-0694">RNA-binding</keyword>
<keyword id="KW-0699">rRNA-binding</keyword>
<proteinExistence type="inferred from homology"/>
<organism>
    <name type="scientific">Streptomyces griseus subsp. griseus (strain JCM 4626 / CBS 651.72 / NBRC 13350 / KCC S-0626 / ISP 5235)</name>
    <dbReference type="NCBI Taxonomy" id="455632"/>
    <lineage>
        <taxon>Bacteria</taxon>
        <taxon>Bacillati</taxon>
        <taxon>Actinomycetota</taxon>
        <taxon>Actinomycetes</taxon>
        <taxon>Kitasatosporales</taxon>
        <taxon>Streptomycetaceae</taxon>
        <taxon>Streptomyces</taxon>
    </lineage>
</organism>
<name>RL9_STRGG</name>
<accession>B1VPC1</accession>
<feature type="chain" id="PRO_1000126975" description="Large ribosomal subunit protein bL9">
    <location>
        <begin position="1"/>
        <end position="148"/>
    </location>
</feature>
<sequence>MKIILTHEVSGLGTAGDVVDVKDGYARNYLVPRGFAIRWTKGGEKDVAQIRRARKIHEIATIEQANEIKAKLEGVKVRLAVRSGDAGRLFGSVTPADVAAAIKAAGGPDVDKRRVELGSPIKTLGGHQVSVRLHPEVAAKLGVEVVAA</sequence>
<dbReference type="EMBL" id="AP009493">
    <property type="protein sequence ID" value="BAG20500.1"/>
    <property type="molecule type" value="Genomic_DNA"/>
</dbReference>
<dbReference type="RefSeq" id="WP_003967856.1">
    <property type="nucleotide sequence ID" value="NC_010572.1"/>
</dbReference>
<dbReference type="SMR" id="B1VPC1"/>
<dbReference type="GeneID" id="65911387"/>
<dbReference type="KEGG" id="sgr:SGR_3671"/>
<dbReference type="eggNOG" id="COG0359">
    <property type="taxonomic scope" value="Bacteria"/>
</dbReference>
<dbReference type="HOGENOM" id="CLU_078938_5_1_11"/>
<dbReference type="Proteomes" id="UP000001685">
    <property type="component" value="Chromosome"/>
</dbReference>
<dbReference type="GO" id="GO:1990904">
    <property type="term" value="C:ribonucleoprotein complex"/>
    <property type="evidence" value="ECO:0007669"/>
    <property type="project" value="UniProtKB-KW"/>
</dbReference>
<dbReference type="GO" id="GO:0005840">
    <property type="term" value="C:ribosome"/>
    <property type="evidence" value="ECO:0007669"/>
    <property type="project" value="UniProtKB-KW"/>
</dbReference>
<dbReference type="GO" id="GO:0019843">
    <property type="term" value="F:rRNA binding"/>
    <property type="evidence" value="ECO:0007669"/>
    <property type="project" value="UniProtKB-UniRule"/>
</dbReference>
<dbReference type="GO" id="GO:0003735">
    <property type="term" value="F:structural constituent of ribosome"/>
    <property type="evidence" value="ECO:0007669"/>
    <property type="project" value="InterPro"/>
</dbReference>
<dbReference type="GO" id="GO:0006412">
    <property type="term" value="P:translation"/>
    <property type="evidence" value="ECO:0007669"/>
    <property type="project" value="UniProtKB-UniRule"/>
</dbReference>
<dbReference type="FunFam" id="3.10.430.100:FF:000006">
    <property type="entry name" value="50S ribosomal protein L9"/>
    <property type="match status" value="1"/>
</dbReference>
<dbReference type="FunFam" id="3.40.5.10:FF:000003">
    <property type="entry name" value="50S ribosomal protein L9"/>
    <property type="match status" value="1"/>
</dbReference>
<dbReference type="Gene3D" id="3.10.430.100">
    <property type="entry name" value="Ribosomal protein L9, C-terminal domain"/>
    <property type="match status" value="1"/>
</dbReference>
<dbReference type="Gene3D" id="3.40.5.10">
    <property type="entry name" value="Ribosomal protein L9, N-terminal domain"/>
    <property type="match status" value="1"/>
</dbReference>
<dbReference type="HAMAP" id="MF_00503">
    <property type="entry name" value="Ribosomal_bL9"/>
    <property type="match status" value="1"/>
</dbReference>
<dbReference type="InterPro" id="IPR000244">
    <property type="entry name" value="Ribosomal_bL9"/>
</dbReference>
<dbReference type="InterPro" id="IPR009027">
    <property type="entry name" value="Ribosomal_bL9/RNase_H1_N"/>
</dbReference>
<dbReference type="InterPro" id="IPR020594">
    <property type="entry name" value="Ribosomal_bL9_bac/chp"/>
</dbReference>
<dbReference type="InterPro" id="IPR020069">
    <property type="entry name" value="Ribosomal_bL9_C"/>
</dbReference>
<dbReference type="InterPro" id="IPR036791">
    <property type="entry name" value="Ribosomal_bL9_C_sf"/>
</dbReference>
<dbReference type="InterPro" id="IPR020070">
    <property type="entry name" value="Ribosomal_bL9_N"/>
</dbReference>
<dbReference type="InterPro" id="IPR036935">
    <property type="entry name" value="Ribosomal_bL9_N_sf"/>
</dbReference>
<dbReference type="NCBIfam" id="TIGR00158">
    <property type="entry name" value="L9"/>
    <property type="match status" value="1"/>
</dbReference>
<dbReference type="PANTHER" id="PTHR21368">
    <property type="entry name" value="50S RIBOSOMAL PROTEIN L9"/>
    <property type="match status" value="1"/>
</dbReference>
<dbReference type="Pfam" id="PF03948">
    <property type="entry name" value="Ribosomal_L9_C"/>
    <property type="match status" value="1"/>
</dbReference>
<dbReference type="Pfam" id="PF01281">
    <property type="entry name" value="Ribosomal_L9_N"/>
    <property type="match status" value="1"/>
</dbReference>
<dbReference type="SUPFAM" id="SSF55658">
    <property type="entry name" value="L9 N-domain-like"/>
    <property type="match status" value="1"/>
</dbReference>
<dbReference type="SUPFAM" id="SSF55653">
    <property type="entry name" value="Ribosomal protein L9 C-domain"/>
    <property type="match status" value="1"/>
</dbReference>
<dbReference type="PROSITE" id="PS00651">
    <property type="entry name" value="RIBOSOMAL_L9"/>
    <property type="match status" value="1"/>
</dbReference>
<reference key="1">
    <citation type="journal article" date="2008" name="J. Bacteriol.">
        <title>Genome sequence of the streptomycin-producing microorganism Streptomyces griseus IFO 13350.</title>
        <authorList>
            <person name="Ohnishi Y."/>
            <person name="Ishikawa J."/>
            <person name="Hara H."/>
            <person name="Suzuki H."/>
            <person name="Ikenoya M."/>
            <person name="Ikeda H."/>
            <person name="Yamashita A."/>
            <person name="Hattori M."/>
            <person name="Horinouchi S."/>
        </authorList>
    </citation>
    <scope>NUCLEOTIDE SEQUENCE [LARGE SCALE GENOMIC DNA]</scope>
    <source>
        <strain>JCM 4626 / CBS 651.72 / NBRC 13350 / KCC S-0626 / ISP 5235</strain>
    </source>
</reference>
<comment type="function">
    <text evidence="1">Binds to the 23S rRNA.</text>
</comment>
<comment type="similarity">
    <text evidence="1">Belongs to the bacterial ribosomal protein bL9 family.</text>
</comment>
<protein>
    <recommendedName>
        <fullName evidence="1">Large ribosomal subunit protein bL9</fullName>
    </recommendedName>
    <alternativeName>
        <fullName evidence="2">50S ribosomal protein L9</fullName>
    </alternativeName>
</protein>